<evidence type="ECO:0000255" key="1">
    <source>
        <dbReference type="HAMAP-Rule" id="MF_04132"/>
    </source>
</evidence>
<evidence type="ECO:0000269" key="2">
    <source>
    </source>
</evidence>
<evidence type="ECO:0000269" key="3">
    <source>
    </source>
</evidence>
<reference key="1">
    <citation type="journal article" date="1991" name="Arch. Virol.">
        <title>Sequence of a rotavirus gene 4 associated with unique biologic properties.</title>
        <authorList>
            <person name="Mattion N.M."/>
            <person name="Estes M.K."/>
        </authorList>
    </citation>
    <scope>NUCLEOTIDE SEQUENCE [GENOMIC RNA]</scope>
</reference>
<reference key="2">
    <citation type="journal article" date="2002" name="J. Virol.">
        <title>Initial interaction of rotavirus strains with N-acetylneuraminic (sialic) acid residues on the cell surface correlates with VP4 genotype, not species of origin.</title>
        <authorList>
            <person name="Ciarlet M."/>
            <person name="Ludert J.E."/>
            <person name="Iturriza-Gomara M."/>
            <person name="Liprandi F."/>
            <person name="Gray J.J."/>
            <person name="Desselberger U."/>
            <person name="Estes M.K."/>
        </authorList>
    </citation>
    <scope>SIALIC ACID DEPENDENCY</scope>
</reference>
<reference key="3">
    <citation type="journal article" date="2009" name="J. Virol.">
        <title>Rotavirus architecture at subnanometer resolution.</title>
        <authorList>
            <person name="Li Z."/>
            <person name="Baker M.L."/>
            <person name="Jiang W."/>
            <person name="Estes M.K."/>
            <person name="Prasad B.V.V."/>
        </authorList>
    </citation>
    <scope>STRUCTURE BY ELECTRON MICROSCOPY OF CAPSID SHELL</scope>
    <scope>SUBUNIT (OUTER CAPSID PROTEIN VP4)</scope>
</reference>
<accession>P0C6Y9</accession>
<dbReference type="EMBL" id="X57319">
    <property type="status" value="NOT_ANNOTATED_CDS"/>
    <property type="molecule type" value="Genomic_RNA"/>
</dbReference>
<dbReference type="SMR" id="P0C6Y9"/>
<dbReference type="GO" id="GO:0044172">
    <property type="term" value="C:host cell endoplasmic reticulum-Golgi intermediate compartment"/>
    <property type="evidence" value="ECO:0007669"/>
    <property type="project" value="UniProtKB-SubCell"/>
</dbReference>
<dbReference type="GO" id="GO:0020002">
    <property type="term" value="C:host cell plasma membrane"/>
    <property type="evidence" value="ECO:0007669"/>
    <property type="project" value="UniProtKB-SubCell"/>
</dbReference>
<dbReference type="GO" id="GO:0044168">
    <property type="term" value="C:host cell rough endoplasmic reticulum"/>
    <property type="evidence" value="ECO:0007669"/>
    <property type="project" value="UniProtKB-SubCell"/>
</dbReference>
<dbReference type="GO" id="GO:0044163">
    <property type="term" value="C:host cytoskeleton"/>
    <property type="evidence" value="ECO:0007669"/>
    <property type="project" value="UniProtKB-SubCell"/>
</dbReference>
<dbReference type="GO" id="GO:0016020">
    <property type="term" value="C:membrane"/>
    <property type="evidence" value="ECO:0007669"/>
    <property type="project" value="UniProtKB-KW"/>
</dbReference>
<dbReference type="GO" id="GO:0039624">
    <property type="term" value="C:viral outer capsid"/>
    <property type="evidence" value="ECO:0007669"/>
    <property type="project" value="UniProtKB-UniRule"/>
</dbReference>
<dbReference type="GO" id="GO:0039665">
    <property type="term" value="P:permeabilization of host organelle membrane involved in viral entry into host cell"/>
    <property type="evidence" value="ECO:0007669"/>
    <property type="project" value="UniProtKB-UniRule"/>
</dbReference>
<dbReference type="GO" id="GO:0019062">
    <property type="term" value="P:virion attachment to host cell"/>
    <property type="evidence" value="ECO:0007669"/>
    <property type="project" value="UniProtKB-UniRule"/>
</dbReference>
<dbReference type="Gene3D" id="1.20.5.170">
    <property type="match status" value="1"/>
</dbReference>
<dbReference type="Gene3D" id="2.60.120.200">
    <property type="match status" value="1"/>
</dbReference>
<dbReference type="HAMAP" id="MF_04132">
    <property type="entry name" value="Rota_A_VP4"/>
    <property type="match status" value="1"/>
</dbReference>
<dbReference type="HAMAP" id="MF_04125">
    <property type="entry name" value="Rota_VP4"/>
    <property type="match status" value="1"/>
</dbReference>
<dbReference type="InterPro" id="IPR013320">
    <property type="entry name" value="ConA-like_dom_sf"/>
</dbReference>
<dbReference type="InterPro" id="IPR042546">
    <property type="entry name" value="Rota_A_VP4"/>
</dbReference>
<dbReference type="InterPro" id="IPR035330">
    <property type="entry name" value="Rota_VP4_MID"/>
</dbReference>
<dbReference type="InterPro" id="IPR038017">
    <property type="entry name" value="Rota_VP4_MID_sf"/>
</dbReference>
<dbReference type="InterPro" id="IPR000416">
    <property type="entry name" value="VP4_concanavalin-like"/>
</dbReference>
<dbReference type="InterPro" id="IPR035329">
    <property type="entry name" value="VP4_helical"/>
</dbReference>
<dbReference type="Pfam" id="PF17477">
    <property type="entry name" value="Rota_VP4_MID"/>
    <property type="match status" value="1"/>
</dbReference>
<dbReference type="Pfam" id="PF00426">
    <property type="entry name" value="VP4_haemagglut"/>
    <property type="match status" value="1"/>
</dbReference>
<dbReference type="Pfam" id="PF17478">
    <property type="entry name" value="VP4_helical"/>
    <property type="match status" value="1"/>
</dbReference>
<dbReference type="SUPFAM" id="SSF49899">
    <property type="entry name" value="Concanavalin A-like lectins/glucanases"/>
    <property type="match status" value="1"/>
</dbReference>
<dbReference type="SUPFAM" id="SSF111379">
    <property type="entry name" value="VP4 membrane interaction domain"/>
    <property type="match status" value="1"/>
</dbReference>
<organismHost>
    <name type="scientific">Macaca mulatta</name>
    <name type="common">Rhesus macaque</name>
    <dbReference type="NCBI Taxonomy" id="9544"/>
</organismHost>
<feature type="chain" id="PRO_0000368156" description="Outer capsid protein VP4" evidence="1">
    <location>
        <begin position="1"/>
        <end position="776"/>
    </location>
</feature>
<feature type="chain" id="PRO_0000368157" description="Outer capsid protein VP8*" evidence="1">
    <location>
        <begin position="1"/>
        <end position="231"/>
    </location>
</feature>
<feature type="chain" id="PRO_0000368158" description="Outer capsid protein VP5*" evidence="1">
    <location>
        <begin position="248"/>
        <end position="776"/>
    </location>
</feature>
<feature type="region of interest" description="Spike head" evidence="1">
    <location>
        <begin position="65"/>
        <end position="224"/>
    </location>
</feature>
<feature type="region of interest" description="Spike body and stalk (antigen domain)" evidence="1">
    <location>
        <begin position="248"/>
        <end position="479"/>
    </location>
</feature>
<feature type="region of interest" description="Hydrophobic; possible role in virus entry into host cell" evidence="1">
    <location>
        <begin position="389"/>
        <end position="409"/>
    </location>
</feature>
<feature type="region of interest" description="Spike foot" evidence="1">
    <location>
        <begin position="510"/>
        <end position="776"/>
    </location>
</feature>
<feature type="coiled-coil region" evidence="1">
    <location>
        <begin position="484"/>
        <end position="518"/>
    </location>
</feature>
<feature type="short sequence motif" description="DGE motif; interaction with ITGA2/ITGB1 heterodimer" evidence="1">
    <location>
        <begin position="308"/>
        <end position="310"/>
    </location>
</feature>
<feature type="short sequence motif" description="YGL motif; interaction with ITGA4" evidence="1">
    <location>
        <begin position="448"/>
        <end position="450"/>
    </location>
</feature>
<feature type="short sequence motif" description="KID motif; interaction with HSPA8" evidence="1">
    <location>
        <begin position="644"/>
        <end position="646"/>
    </location>
</feature>
<feature type="site" description="Binding to sialic acid" evidence="1">
    <location>
        <position position="101"/>
    </location>
</feature>
<feature type="site" description="Binding to sialic acid" evidence="1">
    <location>
        <position position="190"/>
    </location>
</feature>
<feature type="site" description="Cleavage" evidence="1">
    <location>
        <begin position="231"/>
        <end position="232"/>
    </location>
</feature>
<feature type="site" description="Cleavage" evidence="1">
    <location>
        <begin position="241"/>
        <end position="242"/>
    </location>
</feature>
<feature type="site" description="Cleavage; associated with enhancement of infectivity" evidence="1">
    <location>
        <begin position="247"/>
        <end position="248"/>
    </location>
</feature>
<feature type="disulfide bond" evidence="1">
    <location>
        <begin position="203"/>
        <end position="216"/>
    </location>
</feature>
<feature type="disulfide bond" evidence="1">
    <location>
        <begin position="318"/>
        <end position="380"/>
    </location>
</feature>
<organism>
    <name type="scientific">Rotavirus A (strain RVA/SA11-4F/G3P6[1])</name>
    <name type="common">RV-A</name>
    <name type="synonym">Simian Agent 11 (strain 4F)</name>
    <dbReference type="NCBI Taxonomy" id="36436"/>
    <lineage>
        <taxon>Viruses</taxon>
        <taxon>Riboviria</taxon>
        <taxon>Orthornavirae</taxon>
        <taxon>Duplornaviricota</taxon>
        <taxon>Resentoviricetes</taxon>
        <taxon>Reovirales</taxon>
        <taxon>Sedoreoviridae</taxon>
        <taxon>Rotavirus</taxon>
        <taxon>Rotavirus A</taxon>
    </lineage>
</organism>
<name>VP4_ROTS4</name>
<keyword id="KW-0167">Capsid protein</keyword>
<keyword id="KW-0175">Coiled coil</keyword>
<keyword id="KW-1015">Disulfide bond</keyword>
<keyword id="KW-0348">Hemagglutinin</keyword>
<keyword id="KW-1032">Host cell membrane</keyword>
<keyword id="KW-1035">Host cytoplasm</keyword>
<keyword id="KW-1037">Host cytoskeleton</keyword>
<keyword id="KW-1038">Host endoplasmic reticulum</keyword>
<keyword id="KW-1043">Host membrane</keyword>
<keyword id="KW-0945">Host-virus interaction</keyword>
<keyword id="KW-0472">Membrane</keyword>
<keyword id="KW-1152">Outer capsid protein</keyword>
<keyword id="KW-1161">Viral attachment to host cell</keyword>
<keyword id="KW-1162">Viral penetration into host cytoplasm</keyword>
<keyword id="KW-1173">Viral penetration via permeabilization of host membrane</keyword>
<keyword id="KW-0946">Virion</keyword>
<keyword id="KW-1160">Virus entry into host cell</keyword>
<proteinExistence type="evidence at protein level"/>
<sequence length="776" mass="86697">MASLIYRQLLTNSYTVELSDEIQEIGSTKTQNVTVNPGPFAQTNYAPVNWGPGETNDSTTVEPVLDGPYQPTTFNPPVSYWMLLAPTNAGVVVEGTNNTNRWLATILIEPNVQQVERTYTLFGQQVQVTVSNDSQTKWKFVDLSKQTQDGNYSQHGSLLSTPKLYGVMKHGGKIYTYNGETPNANTGYYSTTNFDTVNMTAYCDFYIIPLAQEAKCTEYINNGLPPIQNTRNIVPVSIVSRNIVYTRAQPNQDIVVSKTSLWKEMQYNRDIVIRFKFANSIIKSGGLGYKWSEVSFKPANYQYTYTRDGEEVTAHTTCSVNGVNDFNYNGGSLPTDFVISKYEVIKENSFVYIDYWDDSQAFRNMVYVRSLAADLNSVMCTGGDYSFALPVGNYPVMTGGAVSLHSAGVTLSTQFTDFVSLNSLRFRFRLSVEEPPFSILRTRVSGLYGLPAAKPNNSQEYYEIAGRFSLISLVPLNDDYQTPIMNSVTVRQDLERQLGELRDEFNNLSQQIAMSQLIDLALLPLDMFSMFSGIKSTIDAAKSMATNVMKRFKKSSLANSVSTLTDSLSDAASSISRSASVRSVSSTASAWTEVSNIASDINVTTSSISTQTSTISRRLRLKEMATQTDGMNFDDISAAVLKTKIDKSTQLNTNTLPEIVTEASEKFIPNRAYRVIKDDEVLEASTDGKYFAYKVETFEEIPFDVQKFADLVTDSPVISAIIDFKTLKNLNDNYGISRQQALNLLRSDPRVLREFINQDNPIIRNRIESLIMQCRL</sequence>
<comment type="function">
    <molecule>Outer capsid protein VP4</molecule>
    <text evidence="1">Spike-forming protein that mediates virion attachment to the host epithelial cell receptors and plays a major role in cell penetration, determination of host range restriction and virulence. Rotavirus attachment and entry into the host cell probably involves multiple sequential contacts between the outer capsid proteins VP4 and VP7, and the cell receptors. It is subsequently lost, together with VP7, following virus entry into the host cell. Following entry into the host cell, low intracellular or intravesicular Ca(2+) concentration probably causes the calcium-stabilized VP7 trimers to dissociate from the virion. This step is probably necessary for the membrane-disrupting entry step and the release of VP4, which is locked onto the virion by VP7. During the virus exit from the host cell, VP4 seems to be required to target the newly formed virions to the host cell lipid rafts.</text>
</comment>
<comment type="function">
    <molecule>Outer capsid protein VP5*</molecule>
    <text evidence="1">Forms the spike 'foot' and 'body' and acts as a membrane permeabilization protein that mediates release of viral particles from endosomal compartments into the cytoplasm. During entry, the part of VP5* that protrudes from the virus folds back on itself and reorganizes from a local dimer to a trimer. This reorganization may be linked to membrane penetration by exposing VP5* hydrophobic region. In integrin-dependent strains, VP5* targets the integrin heterodimer ITGA2/ITGB1 for cell attachment.</text>
</comment>
<comment type="function">
    <molecule>Outer capsid protein VP8*</molecule>
    <text evidence="1">Forms the head of the spikes and mediates the recognition of specific host cell surface glycans. It is the viral hemagglutinin and an important target of neutralizing antibodies. In sialic acid-dependent strains, VP8* binds to host cell sialic acid, most probably a ganglioside, providing the initial contact. In some other strains, VP8* mediates the attachment to histo-blood group antigens (HBGAs) for viral entry.</text>
</comment>
<comment type="subunit">
    <molecule>Outer capsid protein VP4</molecule>
    <text evidence="1 3">Homotrimer (PubMed:19036817). VP4 adopts a dimeric appearance above the capsid surface, while forming a trimeric base anchored inside the capsid layer (PubMed:19036817). Only hints of the third molecule are observed above the capsid surface. It probably performs a series of molecular rearrangements during viral entry. Prior to trypsin cleavage, it is flexible. The priming trypsin cleavage triggers its rearrangement into rigid spikes with approximate two-fold symmetry of their protruding parts. After an unknown second triggering event, cleaved VP4 may undergo another rearrangement, in which two VP5* subunits fold back on themselves and join a third subunit to form a tightly associated trimer, shaped like a folded umbrella. Interacts with VP6. Interacts with VP7.</text>
</comment>
<comment type="subunit">
    <molecule>Outer capsid protein VP5*</molecule>
    <text evidence="1">Homotrimer. The trimer is coiled-coil stabilized by its C-terminus, however, its N-terminus, known as antigen domain or 'body', seems to be flexible allowing it to self-associate either as a dimer or a trimer. The two- to three-fold reorganization and fold-back of VP5* may be linked to membrane penetration, by exposing its hydrophobic region (By similarity).</text>
</comment>
<comment type="subcellular location">
    <molecule>Outer capsid protein VP4</molecule>
    <subcellularLocation>
        <location evidence="1">Virion</location>
    </subcellularLocation>
    <subcellularLocation>
        <location evidence="1">Host rough endoplasmic reticulum</location>
    </subcellularLocation>
    <subcellularLocation>
        <location evidence="1">Host cell membrane</location>
    </subcellularLocation>
    <subcellularLocation>
        <location evidence="1">Host cytoplasm</location>
        <location evidence="1">Host cytoskeleton</location>
    </subcellularLocation>
    <subcellularLocation>
        <location evidence="1">Host endoplasmic reticulum-Golgi intermediate compartment</location>
    </subcellularLocation>
    <text evidence="1">The outer layer contains 180 copies of VP4, grouped as 60 dimers. Immature double-layered particles assembled in the cytoplasm bud across the membrane of the endoplasmic reticulum, acquiring during this process a transient lipid membrane that is modified with the ER resident viral glycoproteins NSP4 and VP7; these enveloped particles also contain VP4. As the particles move towards the interior of the ER cisternae, the transient lipid membrane and the non-structural protein NSP4 are lost, while the virus surface proteins VP4 and VP7 rearrange to form the outermost virus protein layer, yielding mature infectious triple-layered particles. VP4 also seems to associate with lipid rafts of the host cell membrane probably for the exit of the virus from the infected cell by an alternate pathway.</text>
</comment>
<comment type="subcellular location">
    <molecule>Outer capsid protein VP8*</molecule>
    <subcellularLocation>
        <location evidence="1">Virion</location>
    </subcellularLocation>
    <text evidence="1">Outer capsid protein.</text>
</comment>
<comment type="subcellular location">
    <molecule>Outer capsid protein VP5*</molecule>
    <subcellularLocation>
        <location evidence="1">Virion</location>
    </subcellularLocation>
    <text evidence="1">Outer capsid protein.</text>
</comment>
<comment type="domain">
    <molecule>Outer capsid protein VP4</molecule>
    <text evidence="1">The VP4 spike is divided into a foot, a stalk and body, and a head.</text>
</comment>
<comment type="PTM">
    <molecule>Outer capsid protein VP4</molecule>
    <text evidence="1">Proteolytic cleavage by trypsin results in activation of VP4 functions and greatly increases infectivity. The penetration into the host cell is dependent on trypsin treatment of VP4. It produces two peptides, VP5* and VP8* that remain associated with the virion. Cleavage of VP4 by trypsin probably occurs in vivo in the lumen of the intestine prior to infection of enterocytes. Trypsin seems to be incorporated into the three-layered viral particles but remains inactive as long as the viral outer capsid is intact and would only be activated upon the solubilization of the latter.</text>
</comment>
<comment type="miscellaneous">
    <text evidence="1">In group A rotaviruses, VP4 defines the P serotype.</text>
</comment>
<comment type="miscellaneous">
    <text evidence="1">Some rotavirus strains are neuraminidase-sensitive and require sialic acid to attach to the cell surface. Some rotavirus strains are integrin-dependent. Some rotavirus strains depend on ganglioside for their entry into the host cell. Hsp70 also seems to be involved in the entry of some strains.</text>
</comment>
<comment type="miscellaneous">
    <text evidence="1 2">This strain probably uses sialic acid to attach to the host cell.</text>
</comment>
<comment type="similarity">
    <text evidence="1">Belongs to the rotavirus VP4 family.</text>
</comment>
<protein>
    <recommendedName>
        <fullName evidence="1">Outer capsid protein VP4</fullName>
    </recommendedName>
    <alternativeName>
        <fullName evidence="1">Hemagglutinin</fullName>
    </alternativeName>
    <component>
        <recommendedName>
            <fullName evidence="1">Outer capsid protein VP8*</fullName>
        </recommendedName>
    </component>
    <component>
        <recommendedName>
            <fullName evidence="1">Outer capsid protein VP5*</fullName>
        </recommendedName>
    </component>
</protein>